<evidence type="ECO:0000250" key="1">
    <source>
        <dbReference type="UniProtKB" id="Q9PZT0"/>
    </source>
</evidence>
<evidence type="ECO:0000256" key="2">
    <source>
        <dbReference type="SAM" id="MobiDB-lite"/>
    </source>
</evidence>
<evidence type="ECO:0000305" key="3"/>
<keyword id="KW-0025">Alternative splicing</keyword>
<keyword id="KW-0167">Capsid protein</keyword>
<keyword id="KW-1165">Clathrin-mediated endocytosis of virus by host</keyword>
<keyword id="KW-1176">Cytoplasmic inwards viral transport</keyword>
<keyword id="KW-1035">Host cytoplasm</keyword>
<keyword id="KW-1048">Host nucleus</keyword>
<keyword id="KW-0945">Host-virus interaction</keyword>
<keyword id="KW-0378">Hydrolase</keyword>
<keyword id="KW-0442">Lipid degradation</keyword>
<keyword id="KW-0443">Lipid metabolism</keyword>
<keyword id="KW-0460">Magnesium</keyword>
<keyword id="KW-0479">Metal-binding</keyword>
<keyword id="KW-1177">Microtubular inwards viral transport</keyword>
<keyword id="KW-1140">T=1 icosahedral capsid protein</keyword>
<keyword id="KW-1161">Viral attachment to host cell</keyword>
<keyword id="KW-1162">Viral penetration into host cytoplasm</keyword>
<keyword id="KW-1163">Viral penetration into host nucleus</keyword>
<keyword id="KW-1173">Viral penetration via permeabilization of host membrane</keyword>
<keyword id="KW-0946">Virion</keyword>
<keyword id="KW-1164">Virus endocytosis by host</keyword>
<keyword id="KW-1160">Virus entry into host cell</keyword>
<organismHost>
    <name type="scientific">Homo sapiens</name>
    <name type="common">Human</name>
    <dbReference type="NCBI Taxonomy" id="9606"/>
</organismHost>
<sequence length="781" mass="86015">MSKKSGKWWESDDKFAKAVYQQFVEFYEKVTGTDLELIQILKDHYNISLDNPLENPSSLFDLVARIKNNLKNSPDLYSHHFQSHGQLSDHPHALSSSSSHAEPRGENAVLSSEDLHKPGQVSVQLPGTNYVGPGNELQAGPPQSAVDSAARIHDFRYSQLAKLGINPYTHWTVADEELLKNIKNETGFQAQVVKDYFTLKGAAAPVAHFQGSLPEVPAYNASEKYPSMTSVNSAEASTGAGGGGSNSVKSMWSEGATFSANSVTCTFSRQFLIPYDPEHHYKVFSPAASSCHNASGKEAKVCTISPIMGYSTPWRYLDFNALNLFFSPLEFQHLIENYGSIAPDALTVTISEIAVKDVTDKTGGGVQVTDSTTGRLCMLVDHEYKYPYVLGQGQDTLAPELPIWVYFPPQYAYLTVGDVNTQGISGDSKKLASEESAFYVLEHSSFQLLGTGGTASMSYKFPPVPPENLEGCSQHFYEMYNPLYGSRLGVPDTLGGDPKFRSLTHEDHAIQPQNFMPGPLVNSVSTKEGDSSNTGAGKALTGLSTGTSQNTRISLRPGPVSQPYHHWDTDKYVTGINAISHGQTTYGNAEDKEYQQGVGRFPNEKEQLKQLQGLNMHTYFPNKGTQQYTDQIERPLMVGSVWNRRALHYESQLWSKIPNLDDSFKTQFAALGGWGLHQPPPQIFLKILPQSGPIGGIKSMGITTLVQYAVGIMTVTMTFKLGPRKATGRWNPQPGVYPPHAAGHLPYVLYDPTATDAKQHHRHGYEKPEELWTAKSRVHPL</sequence>
<dbReference type="EC" id="3.1.1.4"/>
<dbReference type="EMBL" id="M13178">
    <property type="protein sequence ID" value="AAA66867.1"/>
    <property type="molecule type" value="Genomic_DNA"/>
</dbReference>
<dbReference type="PIR" id="A24299">
    <property type="entry name" value="VCPV19"/>
</dbReference>
<dbReference type="SMR" id="P07299"/>
<dbReference type="ABCD" id="P07299">
    <property type="antibodies" value="2 sequenced antibodies"/>
</dbReference>
<dbReference type="Proteomes" id="UP000008027">
    <property type="component" value="Genome"/>
</dbReference>
<dbReference type="GO" id="GO:0043657">
    <property type="term" value="C:host cell"/>
    <property type="evidence" value="ECO:0007669"/>
    <property type="project" value="GOC"/>
</dbReference>
<dbReference type="GO" id="GO:0030430">
    <property type="term" value="C:host cell cytoplasm"/>
    <property type="evidence" value="ECO:0007669"/>
    <property type="project" value="UniProtKB-SubCell"/>
</dbReference>
<dbReference type="GO" id="GO:0042025">
    <property type="term" value="C:host cell nucleus"/>
    <property type="evidence" value="ECO:0007669"/>
    <property type="project" value="UniProtKB-SubCell"/>
</dbReference>
<dbReference type="GO" id="GO:0039615">
    <property type="term" value="C:T=1 icosahedral viral capsid"/>
    <property type="evidence" value="ECO:0007669"/>
    <property type="project" value="UniProtKB-KW"/>
</dbReference>
<dbReference type="GO" id="GO:0046872">
    <property type="term" value="F:metal ion binding"/>
    <property type="evidence" value="ECO:0007669"/>
    <property type="project" value="UniProtKB-KW"/>
</dbReference>
<dbReference type="GO" id="GO:0004623">
    <property type="term" value="F:phospholipase A2 activity"/>
    <property type="evidence" value="ECO:0007669"/>
    <property type="project" value="UniProtKB-EC"/>
</dbReference>
<dbReference type="GO" id="GO:0005198">
    <property type="term" value="F:structural molecule activity"/>
    <property type="evidence" value="ECO:0007669"/>
    <property type="project" value="InterPro"/>
</dbReference>
<dbReference type="GO" id="GO:0075512">
    <property type="term" value="P:clathrin-dependent endocytosis of virus by host cell"/>
    <property type="evidence" value="ECO:0007669"/>
    <property type="project" value="UniProtKB-KW"/>
</dbReference>
<dbReference type="GO" id="GO:0016042">
    <property type="term" value="P:lipid catabolic process"/>
    <property type="evidence" value="ECO:0007669"/>
    <property type="project" value="UniProtKB-KW"/>
</dbReference>
<dbReference type="GO" id="GO:0075521">
    <property type="term" value="P:microtubule-dependent intracellular transport of viral material towards nucleus"/>
    <property type="evidence" value="ECO:0007669"/>
    <property type="project" value="UniProtKB-KW"/>
</dbReference>
<dbReference type="GO" id="GO:0140267">
    <property type="term" value="P:symbiont entry into host cell via permeabilization of host membrane"/>
    <property type="evidence" value="ECO:0007669"/>
    <property type="project" value="UniProtKB-KW"/>
</dbReference>
<dbReference type="GO" id="GO:0075732">
    <property type="term" value="P:viral penetration into host nucleus"/>
    <property type="evidence" value="ECO:0007669"/>
    <property type="project" value="UniProtKB-KW"/>
</dbReference>
<dbReference type="GO" id="GO:0019062">
    <property type="term" value="P:virion attachment to host cell"/>
    <property type="evidence" value="ECO:0007669"/>
    <property type="project" value="UniProtKB-KW"/>
</dbReference>
<dbReference type="FunFam" id="2.170.30.10:FF:000001">
    <property type="entry name" value="Minor capsid protein VP1"/>
    <property type="match status" value="1"/>
</dbReference>
<dbReference type="Gene3D" id="2.170.30.10">
    <property type="entry name" value="Parvovirus coat protein VP1/VP2"/>
    <property type="match status" value="1"/>
</dbReference>
<dbReference type="InterPro" id="IPR016184">
    <property type="entry name" value="Capsid/spike_ssDNA_virus"/>
</dbReference>
<dbReference type="InterPro" id="IPR001403">
    <property type="entry name" value="Parvovirus_coat"/>
</dbReference>
<dbReference type="InterPro" id="IPR013607">
    <property type="entry name" value="Phospholipase_A2-like"/>
</dbReference>
<dbReference type="InterPro" id="IPR036952">
    <property type="entry name" value="VP1/VP2"/>
</dbReference>
<dbReference type="Pfam" id="PF00740">
    <property type="entry name" value="Parvo_coat"/>
    <property type="match status" value="1"/>
</dbReference>
<dbReference type="Pfam" id="PF08398">
    <property type="entry name" value="Phospholip_A2_4"/>
    <property type="match status" value="1"/>
</dbReference>
<dbReference type="SUPFAM" id="SSF88645">
    <property type="entry name" value="ssDNA viruses"/>
    <property type="match status" value="1"/>
</dbReference>
<proteinExistence type="evidence at protein level"/>
<accession>P07299</accession>
<name>CAPSD_PAVHU</name>
<protein>
    <recommendedName>
        <fullName>Minor capsid protein VP1</fullName>
        <ecNumber>3.1.1.4</ecNumber>
    </recommendedName>
    <alternativeName>
        <fullName>Coat protein VP1</fullName>
    </alternativeName>
</protein>
<comment type="function">
    <text evidence="1">Capsid protein self-assembles to form an icosahedral capsid with a T=1 symmetry, about 20 nm in diameter, and consisting of 60 copies of two size variants of the capsid proteins, VP1 and VP2, which differ by the presence of an N-terminal extension in the minor protein VP1. The capsid encapsulates the genomic ssDNA. Binds to erythroid progenitor cells expressing high levels of P antigen and uses host ITGA5-ITGB1 and XRCC5/Ku80 autoantigen as coreceptors on the cell surface to provide virion attachment to target cell. This attachment induces virion internalization predominantly through clathrin-dependent endocytosis. Binding to the host receptors also induces capsid rearrangements leading to surface exposure of VP1 N-terminus, specifically its phospholipase A2-like region. The additional N-terminal region of isoform Minor capsid protein VP1, called VP1u, may serve as a lipolytic enzyme to breach the endosomal membrane during entry into host cell and might contribute to virus transport to the nucleus.</text>
</comment>
<comment type="catalytic activity">
    <reaction evidence="1">
        <text>a 1,2-diacyl-sn-glycero-3-phosphocholine + H2O = a 1-acyl-sn-glycero-3-phosphocholine + a fatty acid + H(+)</text>
        <dbReference type="Rhea" id="RHEA:15801"/>
        <dbReference type="ChEBI" id="CHEBI:15377"/>
        <dbReference type="ChEBI" id="CHEBI:15378"/>
        <dbReference type="ChEBI" id="CHEBI:28868"/>
        <dbReference type="ChEBI" id="CHEBI:57643"/>
        <dbReference type="ChEBI" id="CHEBI:58168"/>
        <dbReference type="EC" id="3.1.1.4"/>
    </reaction>
</comment>
<comment type="subunit">
    <molecule>Isoform Minor capsid protein VP1</molecule>
    <text evidence="1">Heteromultimer of isoform Minor capsid protein VP1 and isoform Major capsid protein VP2.</text>
</comment>
<comment type="subunit">
    <molecule>Isoform Major capsid protein VP2</molecule>
    <text evidence="1">Heteromultimer of isoform Minor capsid protein VP1 and isoform Major capsid protein VP2. 20 fold more abundant than the minor capsid protein VP1.</text>
</comment>
<comment type="subcellular location">
    <molecule>Isoform Minor capsid protein VP1</molecule>
    <subcellularLocation>
        <location evidence="1">Virion</location>
    </subcellularLocation>
    <subcellularLocation>
        <location evidence="1">Host nucleus</location>
    </subcellularLocation>
    <subcellularLocation>
        <location evidence="1">Host cytoplasm</location>
    </subcellularLocation>
</comment>
<comment type="subcellular location">
    <molecule>Isoform Major capsid protein VP2</molecule>
    <subcellularLocation>
        <location evidence="1">Virion</location>
    </subcellularLocation>
    <subcellularLocation>
        <location evidence="1">Host nucleus</location>
    </subcellularLocation>
    <subcellularLocation>
        <location evidence="1">Host cytoplasm</location>
    </subcellularLocation>
</comment>
<comment type="alternative products">
    <event type="alternative splicing"/>
    <isoform>
        <id>P07299-1</id>
        <name>Minor capsid protein VP1</name>
        <sequence type="displayed"/>
    </isoform>
    <isoform>
        <id>P07299-2</id>
        <name>Major capsid protein VP2</name>
        <sequence type="described" ref="VSP_059854"/>
    </isoform>
</comment>
<comment type="domain">
    <molecule>Isoform Minor capsid protein VP1</molecule>
    <text evidence="1">The N-terminus of VP1, VP1u, contains a phospholipase A2-like region. VP1u is necessary and sufficient for host cell binding and internalization.</text>
</comment>
<comment type="domain">
    <text evidence="1">A nuclear localization signal is present in the C-terminus and can be recognized by cellular nuclear import molecules. After assembly, it is hidden because it is on the inner capsid surface.</text>
</comment>
<comment type="miscellaneous">
    <molecule>Isoform Minor capsid protein VP1</molecule>
    <text evidence="1">Minor splicing isoform.</text>
</comment>
<comment type="miscellaneous">
    <molecule>Isoform Major capsid protein VP2</molecule>
    <text evidence="1">Major splicing isoform produced by deletion of the initiating AUG for VP1 and downstream translation of VP2.</text>
</comment>
<comment type="similarity">
    <text evidence="3">Belongs to the parvoviridae capsid protein family.</text>
</comment>
<comment type="online information" name="Virus Particle ExploreR db">
    <link uri="https://viperdb.org/Info_Page.php?VDB=1s58"/>
    <text>Icosahedral capsid structure</text>
</comment>
<reference key="1">
    <citation type="journal article" date="1986" name="J. Virol.">
        <title>Nucleotide sequence and genome organization of human parvovirus B19 isolated from the serum of a child during aplastic crisis.</title>
        <authorList>
            <person name="Shade R.O."/>
            <person name="Blundell M.C."/>
            <person name="Cotmore S.F."/>
            <person name="Tattersall P."/>
            <person name="Astell C.R."/>
        </authorList>
    </citation>
    <scope>NUCLEOTIDE SEQUENCE [GENOMIC DNA]</scope>
</reference>
<reference key="2">
    <citation type="journal article" date="2003" name="Blood">
        <title>Alpha5beta1 integrin as a cellular coreceptor for human parvovirus B19: requirement of functional activation of beta1 integrin for viral entry.</title>
        <authorList>
            <person name="Weigel-Kelley K.A."/>
            <person name="Yoder M.C."/>
            <person name="Srivastava A."/>
        </authorList>
    </citation>
    <scope>FUNCTION</scope>
    <scope>INTERACTION WITH INTEGRIN HETERODIMER ITGAV/ITGB1</scope>
</reference>
<reference key="3">
    <citation type="journal article" date="2010" name="J. Virol.">
        <title>The globoside receptor triggers structural changes in the B19 virus capsid that facilitate virus internalization.</title>
        <authorList>
            <person name="Boensch C."/>
            <person name="Zuercher C."/>
            <person name="Lieby P."/>
            <person name="Kempf C."/>
            <person name="Ros C."/>
        </authorList>
    </citation>
    <scope>FUNCTION</scope>
    <scope>INTERACTION WITH THE HOST GLOBOSIDE RECEPTOR</scope>
</reference>
<reference key="4">
    <citation type="journal article" date="2010" name="J. Virol.">
        <title>Advances in human B19 erythrovirus biology.</title>
        <authorList>
            <person name="Servant-Delmas A."/>
            <person name="Lefrere J.J."/>
            <person name="Morinet F."/>
            <person name="Pillet S."/>
        </authorList>
    </citation>
    <scope>REVIEW</scope>
</reference>
<feature type="chain" id="PRO_0000222459" description="Minor capsid protein VP1">
    <location>
        <begin position="1"/>
        <end position="781"/>
    </location>
</feature>
<feature type="region of interest" description="Binding to the host cell receptor and internalization" evidence="1">
    <location>
        <begin position="5"/>
        <end position="80"/>
    </location>
</feature>
<feature type="region of interest" description="Disordered" evidence="2">
    <location>
        <begin position="77"/>
        <end position="111"/>
    </location>
</feature>
<feature type="region of interest" description="Phospholipase A2-like">
    <location>
        <begin position="130"/>
        <end position="175"/>
    </location>
</feature>
<feature type="region of interest" description="Disordered" evidence="2">
    <location>
        <begin position="524"/>
        <end position="561"/>
    </location>
</feature>
<feature type="region of interest" description="Disordered" evidence="2">
    <location>
        <begin position="761"/>
        <end position="781"/>
    </location>
</feature>
<feature type="short sequence motif" description="Nuclear localization signal" evidence="1">
    <location>
        <begin position="720"/>
        <end position="730"/>
    </location>
</feature>
<feature type="compositionally biased region" description="Polar residues" evidence="2">
    <location>
        <begin position="524"/>
        <end position="535"/>
    </location>
</feature>
<feature type="compositionally biased region" description="Polar residues" evidence="2">
    <location>
        <begin position="542"/>
        <end position="553"/>
    </location>
</feature>
<feature type="splice variant" id="VSP_059854" description="In isoform Major capsid protein VP2.">
    <location>
        <begin position="1"/>
        <end position="227"/>
    </location>
</feature>
<organism>
    <name type="scientific">Human parvovirus B19 (isolate AU)</name>
    <name type="common">HPV B19</name>
    <dbReference type="NCBI Taxonomy" id="648238"/>
    <lineage>
        <taxon>Viruses</taxon>
        <taxon>Monodnaviria</taxon>
        <taxon>Shotokuvirae</taxon>
        <taxon>Cossaviricota</taxon>
        <taxon>Quintoviricetes</taxon>
        <taxon>Piccovirales</taxon>
        <taxon>Parvoviridae</taxon>
        <taxon>Parvovirinae</taxon>
        <taxon>Erythroparvovirus</taxon>
        <taxon>Erythroparvovirus primate1</taxon>
    </lineage>
</organism>